<protein>
    <recommendedName>
        <fullName evidence="1">Protein translocase subunit SecA</fullName>
        <ecNumber evidence="1">7.4.2.8</ecNumber>
    </recommendedName>
</protein>
<proteinExistence type="evidence at protein level"/>
<comment type="function">
    <text evidence="1">Part of the Sec protein translocase complex. Interacts with the SecYEG preprotein conducting channel. Has a central role in coupling the hydrolysis of ATP to the transfer of proteins into and across the cell membrane, serving as an ATP-driven molecular motor driving the stepwise translocation of polypeptide chains across the membrane.</text>
</comment>
<comment type="catalytic activity">
    <reaction evidence="1">
        <text>ATP + H2O + cellular proteinSide 1 = ADP + phosphate + cellular proteinSide 2.</text>
        <dbReference type="EC" id="7.4.2.8"/>
    </reaction>
</comment>
<comment type="cofactor">
    <cofactor evidence="1">
        <name>Zn(2+)</name>
        <dbReference type="ChEBI" id="CHEBI:29105"/>
    </cofactor>
    <text evidence="1">May bind 1 zinc ion per subunit.</text>
</comment>
<comment type="subunit">
    <text evidence="1">Monomer and homodimer. Part of the essential Sec protein translocation apparatus which comprises SecA, SecYEG and auxiliary proteins SecDF. Other proteins may also be involved.</text>
</comment>
<comment type="subcellular location">
    <subcellularLocation>
        <location evidence="1">Cell inner membrane</location>
        <topology evidence="1">Peripheral membrane protein</topology>
        <orientation evidence="1">Cytoplasmic side</orientation>
    </subcellularLocation>
    <subcellularLocation>
        <location evidence="1">Cytoplasm</location>
    </subcellularLocation>
    <text evidence="1">Distribution is 50-50.</text>
</comment>
<comment type="biotechnology">
    <text evidence="3">Has shown promise in a 4-component vaccine with BHWA1_00430 (AC C0QY54), BHWA1_00569 (AC C0QYX7) and flaAL (AC C0QWY9).</text>
</comment>
<comment type="similarity">
    <text evidence="1">Belongs to the SecA family.</text>
</comment>
<sequence length="980" mass="111045">MGAMDLVFKLIFGSKEQNDAKILKPIAEKTLTFEEEIKKLSNEELTNKTKEFRERVEKYIGCKTEELDLSKEENKKKLQNILDEILPEAFAVVREASIRTTGMRHFDVQVMGGAVLHQGRIAEMKTGEGKTLVATLAVYLNALTGLGVHVVTVNDYLAKRDAEWMTPIYSMLGISVGILDNTRPHSPERRAVYNCDVVYGTNNEFGFDYLRDNMVTRKEDKVQRKFYFAIVDEVDSILIDEARTPLIISGPAEKNIKMYYEIDRIIPMLKQAEVDERMREVAGTGDYVLDEKDKNVYLTEEGVHKVEKLLNVENLYGAQSSTIVHHVNQALKAHKVFKKDVDYMVTDGEVLIVDEFTGRVLEGRRYSDGLHQAIEAKEKVAIQNESQTYATITFQNYFRMYPKLSGMTGTAETEAEEFYKIYKLDVAVIPTNKPIARQDLSDRIYRTRKAKFEALAKYIKELQDAGKPALVGTVSVEMNEELSKVFKRHKINHEVLNAKNHSREAAIIAQAGEPGAVTLATNMAGRGTDIVLGGNPVAKGVAEIEQILVLMRDKAFKERDPYKKEELTKKIKSIDLYKEAFVRSVISGKIEEAKELAQKNNADEMIEKIDRIIQINEKAKVDKERVLAAGGLHVIGSERHEARRIDNQLRGRSGRQGDPGLSVFFLSLEDDLMRLFGGERVSKMMLAMGMGEEEELGHKWLNKSIENAQRKVEGRNFDIRKHLLEYDDVMNQQRMAVYGERDYILYSDDISPRVEEIISEVTEETIEDISGNKKNVDALEVTKWLNSYLIGIDEDAANKAVEGGVDNAVKNLTNLLLEAYRKKASEIDEKIFREVEKNIFLSIIDNRWKDHLFAMDSLREGIGLRGYAEKNPLTEYKLEGYKMFMATMNVIHNELVNLIMRVRIIPNSFDTIERESAFDGGVEEKSSASAMNGGNAQAIQSKVKNAQPNVKMAQKIGRNDPCPCGSGKKYKHCHGKDNPQ</sequence>
<keyword id="KW-0067">ATP-binding</keyword>
<keyword id="KW-0997">Cell inner membrane</keyword>
<keyword id="KW-1003">Cell membrane</keyword>
<keyword id="KW-0963">Cytoplasm</keyword>
<keyword id="KW-0472">Membrane</keyword>
<keyword id="KW-0479">Metal-binding</keyword>
<keyword id="KW-0547">Nucleotide-binding</keyword>
<keyword id="KW-0653">Protein transport</keyword>
<keyword id="KW-1278">Translocase</keyword>
<keyword id="KW-0811">Translocation</keyword>
<keyword id="KW-0813">Transport</keyword>
<keyword id="KW-0862">Zinc</keyword>
<gene>
    <name evidence="1" type="primary">secA</name>
    <name type="ordered locus">BHWA1_00872</name>
</gene>
<evidence type="ECO:0000255" key="1">
    <source>
        <dbReference type="HAMAP-Rule" id="MF_01382"/>
    </source>
</evidence>
<evidence type="ECO:0000256" key="2">
    <source>
        <dbReference type="SAM" id="MobiDB-lite"/>
    </source>
</evidence>
<evidence type="ECO:0000269" key="3">
    <source>
    </source>
</evidence>
<name>SECA_BRAHW</name>
<organism>
    <name type="scientific">Brachyspira hyodysenteriae (strain ATCC 49526 / WA1)</name>
    <dbReference type="NCBI Taxonomy" id="565034"/>
    <lineage>
        <taxon>Bacteria</taxon>
        <taxon>Pseudomonadati</taxon>
        <taxon>Spirochaetota</taxon>
        <taxon>Spirochaetia</taxon>
        <taxon>Brachyspirales</taxon>
        <taxon>Brachyspiraceae</taxon>
        <taxon>Brachyspira</taxon>
    </lineage>
</organism>
<accession>C0QZS7</accession>
<feature type="chain" id="PRO_1000184216" description="Protein translocase subunit SecA">
    <location>
        <begin position="1"/>
        <end position="980"/>
    </location>
</feature>
<feature type="region of interest" description="Disordered" evidence="2">
    <location>
        <begin position="954"/>
        <end position="980"/>
    </location>
</feature>
<feature type="binding site" evidence="1">
    <location>
        <position position="109"/>
    </location>
    <ligand>
        <name>ATP</name>
        <dbReference type="ChEBI" id="CHEBI:30616"/>
    </ligand>
</feature>
<feature type="binding site" evidence="1">
    <location>
        <begin position="127"/>
        <end position="131"/>
    </location>
    <ligand>
        <name>ATP</name>
        <dbReference type="ChEBI" id="CHEBI:30616"/>
    </ligand>
</feature>
<feature type="binding site" evidence="1">
    <location>
        <position position="529"/>
    </location>
    <ligand>
        <name>ATP</name>
        <dbReference type="ChEBI" id="CHEBI:30616"/>
    </ligand>
</feature>
<feature type="binding site" evidence="1">
    <location>
        <position position="962"/>
    </location>
    <ligand>
        <name>Zn(2+)</name>
        <dbReference type="ChEBI" id="CHEBI:29105"/>
    </ligand>
</feature>
<feature type="binding site" evidence="1">
    <location>
        <position position="964"/>
    </location>
    <ligand>
        <name>Zn(2+)</name>
        <dbReference type="ChEBI" id="CHEBI:29105"/>
    </ligand>
</feature>
<feature type="binding site" evidence="1">
    <location>
        <position position="973"/>
    </location>
    <ligand>
        <name>Zn(2+)</name>
        <dbReference type="ChEBI" id="CHEBI:29105"/>
    </ligand>
</feature>
<feature type="binding site" evidence="1">
    <location>
        <position position="974"/>
    </location>
    <ligand>
        <name>Zn(2+)</name>
        <dbReference type="ChEBI" id="CHEBI:29105"/>
    </ligand>
</feature>
<reference key="1">
    <citation type="journal article" date="2009" name="Vet. Microbiol.">
        <title>A reverse vaccinology approach to swine dysentery vaccine development.</title>
        <authorList>
            <person name="Song Y."/>
            <person name="La T."/>
            <person name="Phillips N.D."/>
            <person name="Bellgard M.I."/>
            <person name="Hampson D.J."/>
        </authorList>
    </citation>
    <scope>NUCLEOTIDE SEQUENCE [GENOMIC DNA]</scope>
    <scope>BIOTECHNOLOGY</scope>
</reference>
<reference key="2">
    <citation type="journal article" date="2009" name="PLoS ONE">
        <title>Genome sequence of the pathogenic intestinal spirochete Brachyspira hyodysenteriae reveals adaptations to its lifestyle in the porcine large intestine.</title>
        <authorList>
            <person name="Bellgard M.I."/>
            <person name="Wanchanthuek P."/>
            <person name="La T."/>
            <person name="Ryan K."/>
            <person name="Moolhuijzen P."/>
            <person name="Albertyn Z."/>
            <person name="Shaban B."/>
            <person name="Motro Y."/>
            <person name="Dunn D.S."/>
            <person name="Schibeci D."/>
            <person name="Hunter A."/>
            <person name="Barrero R."/>
            <person name="Phillips N.D."/>
            <person name="Hampson D.J."/>
        </authorList>
    </citation>
    <scope>NUCLEOTIDE SEQUENCE [LARGE SCALE GENOMIC DNA]</scope>
    <source>
        <strain>ATCC 49526 / WA1</strain>
    </source>
</reference>
<dbReference type="EC" id="7.4.2.8" evidence="1"/>
<dbReference type="EMBL" id="EU555159">
    <property type="protein sequence ID" value="ACD74829.1"/>
    <property type="molecule type" value="Genomic_DNA"/>
</dbReference>
<dbReference type="EMBL" id="CP001357">
    <property type="protein sequence ID" value="ACN83365.1"/>
    <property type="molecule type" value="Genomic_DNA"/>
</dbReference>
<dbReference type="RefSeq" id="WP_012670414.1">
    <property type="nucleotide sequence ID" value="NC_012225.1"/>
</dbReference>
<dbReference type="SMR" id="C0QZS7"/>
<dbReference type="STRING" id="565034.BHWA1_00872"/>
<dbReference type="GeneID" id="63961982"/>
<dbReference type="KEGG" id="bhy:BHWA1_00872"/>
<dbReference type="eggNOG" id="COG0653">
    <property type="taxonomic scope" value="Bacteria"/>
</dbReference>
<dbReference type="HOGENOM" id="CLU_005314_3_0_12"/>
<dbReference type="Proteomes" id="UP000001803">
    <property type="component" value="Chromosome"/>
</dbReference>
<dbReference type="GO" id="GO:0031522">
    <property type="term" value="C:cell envelope Sec protein transport complex"/>
    <property type="evidence" value="ECO:0007669"/>
    <property type="project" value="TreeGrafter"/>
</dbReference>
<dbReference type="GO" id="GO:0005829">
    <property type="term" value="C:cytosol"/>
    <property type="evidence" value="ECO:0007669"/>
    <property type="project" value="TreeGrafter"/>
</dbReference>
<dbReference type="GO" id="GO:0005886">
    <property type="term" value="C:plasma membrane"/>
    <property type="evidence" value="ECO:0007669"/>
    <property type="project" value="UniProtKB-SubCell"/>
</dbReference>
<dbReference type="GO" id="GO:0005524">
    <property type="term" value="F:ATP binding"/>
    <property type="evidence" value="ECO:0007669"/>
    <property type="project" value="UniProtKB-UniRule"/>
</dbReference>
<dbReference type="GO" id="GO:0046872">
    <property type="term" value="F:metal ion binding"/>
    <property type="evidence" value="ECO:0007669"/>
    <property type="project" value="UniProtKB-KW"/>
</dbReference>
<dbReference type="GO" id="GO:0008564">
    <property type="term" value="F:protein-exporting ATPase activity"/>
    <property type="evidence" value="ECO:0007669"/>
    <property type="project" value="UniProtKB-EC"/>
</dbReference>
<dbReference type="GO" id="GO:0065002">
    <property type="term" value="P:intracellular protein transmembrane transport"/>
    <property type="evidence" value="ECO:0007669"/>
    <property type="project" value="UniProtKB-UniRule"/>
</dbReference>
<dbReference type="GO" id="GO:0017038">
    <property type="term" value="P:protein import"/>
    <property type="evidence" value="ECO:0007669"/>
    <property type="project" value="InterPro"/>
</dbReference>
<dbReference type="GO" id="GO:0006605">
    <property type="term" value="P:protein targeting"/>
    <property type="evidence" value="ECO:0007669"/>
    <property type="project" value="UniProtKB-UniRule"/>
</dbReference>
<dbReference type="GO" id="GO:0043952">
    <property type="term" value="P:protein transport by the Sec complex"/>
    <property type="evidence" value="ECO:0007669"/>
    <property type="project" value="TreeGrafter"/>
</dbReference>
<dbReference type="CDD" id="cd17928">
    <property type="entry name" value="DEXDc_SecA"/>
    <property type="match status" value="1"/>
</dbReference>
<dbReference type="CDD" id="cd18803">
    <property type="entry name" value="SF2_C_secA"/>
    <property type="match status" value="1"/>
</dbReference>
<dbReference type="FunFam" id="3.40.50.300:FF:000246">
    <property type="entry name" value="Preprotein translocase subunit SecA"/>
    <property type="match status" value="1"/>
</dbReference>
<dbReference type="FunFam" id="3.90.1440.10:FF:000002">
    <property type="entry name" value="Protein translocase subunit SecA"/>
    <property type="match status" value="1"/>
</dbReference>
<dbReference type="Gene3D" id="3.10.450.50">
    <property type="match status" value="1"/>
</dbReference>
<dbReference type="Gene3D" id="1.10.3060.10">
    <property type="entry name" value="Helical scaffold and wing domains of SecA"/>
    <property type="match status" value="1"/>
</dbReference>
<dbReference type="Gene3D" id="3.40.50.300">
    <property type="entry name" value="P-loop containing nucleotide triphosphate hydrolases"/>
    <property type="match status" value="2"/>
</dbReference>
<dbReference type="Gene3D" id="3.90.1440.10">
    <property type="entry name" value="SecA, preprotein cross-linking domain"/>
    <property type="match status" value="1"/>
</dbReference>
<dbReference type="HAMAP" id="MF_01382">
    <property type="entry name" value="SecA"/>
    <property type="match status" value="1"/>
</dbReference>
<dbReference type="InterPro" id="IPR014001">
    <property type="entry name" value="Helicase_ATP-bd"/>
</dbReference>
<dbReference type="InterPro" id="IPR027417">
    <property type="entry name" value="P-loop_NTPase"/>
</dbReference>
<dbReference type="InterPro" id="IPR004027">
    <property type="entry name" value="SEC_C_motif"/>
</dbReference>
<dbReference type="InterPro" id="IPR000185">
    <property type="entry name" value="SecA"/>
</dbReference>
<dbReference type="InterPro" id="IPR011115">
    <property type="entry name" value="SecA_DEAD"/>
</dbReference>
<dbReference type="InterPro" id="IPR014018">
    <property type="entry name" value="SecA_motor_DEAD"/>
</dbReference>
<dbReference type="InterPro" id="IPR011130">
    <property type="entry name" value="SecA_preprotein_X-link_dom"/>
</dbReference>
<dbReference type="InterPro" id="IPR044722">
    <property type="entry name" value="SecA_SF2_C"/>
</dbReference>
<dbReference type="InterPro" id="IPR011116">
    <property type="entry name" value="SecA_Wing/Scaffold"/>
</dbReference>
<dbReference type="InterPro" id="IPR036266">
    <property type="entry name" value="SecA_Wing/Scaffold_sf"/>
</dbReference>
<dbReference type="InterPro" id="IPR036670">
    <property type="entry name" value="SecA_X-link_sf"/>
</dbReference>
<dbReference type="NCBIfam" id="NF009538">
    <property type="entry name" value="PRK12904.1"/>
    <property type="match status" value="1"/>
</dbReference>
<dbReference type="NCBIfam" id="TIGR00963">
    <property type="entry name" value="secA"/>
    <property type="match status" value="1"/>
</dbReference>
<dbReference type="PANTHER" id="PTHR30612:SF0">
    <property type="entry name" value="CHLOROPLAST PROTEIN-TRANSPORTING ATPASE"/>
    <property type="match status" value="1"/>
</dbReference>
<dbReference type="PANTHER" id="PTHR30612">
    <property type="entry name" value="SECA INNER MEMBRANE COMPONENT OF SEC PROTEIN SECRETION SYSTEM"/>
    <property type="match status" value="1"/>
</dbReference>
<dbReference type="Pfam" id="PF21090">
    <property type="entry name" value="P-loop_SecA"/>
    <property type="match status" value="1"/>
</dbReference>
<dbReference type="Pfam" id="PF02810">
    <property type="entry name" value="SEC-C"/>
    <property type="match status" value="1"/>
</dbReference>
<dbReference type="Pfam" id="PF07517">
    <property type="entry name" value="SecA_DEAD"/>
    <property type="match status" value="1"/>
</dbReference>
<dbReference type="Pfam" id="PF01043">
    <property type="entry name" value="SecA_PP_bind"/>
    <property type="match status" value="1"/>
</dbReference>
<dbReference type="Pfam" id="PF07516">
    <property type="entry name" value="SecA_SW"/>
    <property type="match status" value="1"/>
</dbReference>
<dbReference type="PRINTS" id="PR00906">
    <property type="entry name" value="SECA"/>
</dbReference>
<dbReference type="SMART" id="SM00957">
    <property type="entry name" value="SecA_DEAD"/>
    <property type="match status" value="1"/>
</dbReference>
<dbReference type="SMART" id="SM00958">
    <property type="entry name" value="SecA_PP_bind"/>
    <property type="match status" value="1"/>
</dbReference>
<dbReference type="SUPFAM" id="SSF81886">
    <property type="entry name" value="Helical scaffold and wing domains of SecA"/>
    <property type="match status" value="1"/>
</dbReference>
<dbReference type="SUPFAM" id="SSF52540">
    <property type="entry name" value="P-loop containing nucleoside triphosphate hydrolases"/>
    <property type="match status" value="2"/>
</dbReference>
<dbReference type="SUPFAM" id="SSF81767">
    <property type="entry name" value="Pre-protein crosslinking domain of SecA"/>
    <property type="match status" value="1"/>
</dbReference>
<dbReference type="PROSITE" id="PS51196">
    <property type="entry name" value="SECA_MOTOR_DEAD"/>
    <property type="match status" value="1"/>
</dbReference>